<comment type="similarity">
    <text evidence="1">Belongs to the bacterial ribosomal protein bL32 family.</text>
</comment>
<keyword id="KW-0687">Ribonucleoprotein</keyword>
<keyword id="KW-0689">Ribosomal protein</keyword>
<sequence length="59" mass="6660">MAVQQNRKTRSKRGMRRSHDALSAAALSTDATTGEVHRRHHVSPDGFYRGKQVVEARDE</sequence>
<organism>
    <name type="scientific">Marinobacter nauticus (strain ATCC 700491 / DSM 11845 / VT8)</name>
    <name type="common">Marinobacter aquaeolei</name>
    <dbReference type="NCBI Taxonomy" id="351348"/>
    <lineage>
        <taxon>Bacteria</taxon>
        <taxon>Pseudomonadati</taxon>
        <taxon>Pseudomonadota</taxon>
        <taxon>Gammaproteobacteria</taxon>
        <taxon>Pseudomonadales</taxon>
        <taxon>Marinobacteraceae</taxon>
        <taxon>Marinobacter</taxon>
    </lineage>
</organism>
<feature type="chain" id="PRO_0000296498" description="Large ribosomal subunit protein bL32">
    <location>
        <begin position="1"/>
        <end position="59"/>
    </location>
</feature>
<feature type="region of interest" description="Disordered" evidence="2">
    <location>
        <begin position="1"/>
        <end position="59"/>
    </location>
</feature>
<feature type="compositionally biased region" description="Basic residues" evidence="2">
    <location>
        <begin position="7"/>
        <end position="16"/>
    </location>
</feature>
<feature type="compositionally biased region" description="Low complexity" evidence="2">
    <location>
        <begin position="21"/>
        <end position="33"/>
    </location>
</feature>
<protein>
    <recommendedName>
        <fullName evidence="1">Large ribosomal subunit protein bL32</fullName>
    </recommendedName>
    <alternativeName>
        <fullName evidence="3">50S ribosomal protein L32</fullName>
    </alternativeName>
</protein>
<dbReference type="EMBL" id="CP000514">
    <property type="protein sequence ID" value="ABM18952.1"/>
    <property type="molecule type" value="Genomic_DNA"/>
</dbReference>
<dbReference type="RefSeq" id="WP_011785345.1">
    <property type="nucleotide sequence ID" value="NC_008740.1"/>
</dbReference>
<dbReference type="SMR" id="A1U1T3"/>
<dbReference type="STRING" id="351348.Maqu_1870"/>
<dbReference type="GeneID" id="94723381"/>
<dbReference type="KEGG" id="maq:Maqu_1870"/>
<dbReference type="eggNOG" id="COG0333">
    <property type="taxonomic scope" value="Bacteria"/>
</dbReference>
<dbReference type="HOGENOM" id="CLU_129084_2_1_6"/>
<dbReference type="Proteomes" id="UP000000998">
    <property type="component" value="Chromosome"/>
</dbReference>
<dbReference type="GO" id="GO:0015934">
    <property type="term" value="C:large ribosomal subunit"/>
    <property type="evidence" value="ECO:0007669"/>
    <property type="project" value="InterPro"/>
</dbReference>
<dbReference type="GO" id="GO:0003735">
    <property type="term" value="F:structural constituent of ribosome"/>
    <property type="evidence" value="ECO:0007669"/>
    <property type="project" value="InterPro"/>
</dbReference>
<dbReference type="GO" id="GO:0006412">
    <property type="term" value="P:translation"/>
    <property type="evidence" value="ECO:0007669"/>
    <property type="project" value="UniProtKB-UniRule"/>
</dbReference>
<dbReference type="HAMAP" id="MF_00340">
    <property type="entry name" value="Ribosomal_bL32"/>
    <property type="match status" value="1"/>
</dbReference>
<dbReference type="InterPro" id="IPR002677">
    <property type="entry name" value="Ribosomal_bL32"/>
</dbReference>
<dbReference type="InterPro" id="IPR044957">
    <property type="entry name" value="Ribosomal_bL32_bact"/>
</dbReference>
<dbReference type="InterPro" id="IPR011332">
    <property type="entry name" value="Ribosomal_zn-bd"/>
</dbReference>
<dbReference type="NCBIfam" id="TIGR01031">
    <property type="entry name" value="rpmF_bact"/>
    <property type="match status" value="1"/>
</dbReference>
<dbReference type="PANTHER" id="PTHR35534">
    <property type="entry name" value="50S RIBOSOMAL PROTEIN L32"/>
    <property type="match status" value="1"/>
</dbReference>
<dbReference type="PANTHER" id="PTHR35534:SF1">
    <property type="entry name" value="LARGE RIBOSOMAL SUBUNIT PROTEIN BL32"/>
    <property type="match status" value="1"/>
</dbReference>
<dbReference type="Pfam" id="PF01783">
    <property type="entry name" value="Ribosomal_L32p"/>
    <property type="match status" value="1"/>
</dbReference>
<dbReference type="SUPFAM" id="SSF57829">
    <property type="entry name" value="Zn-binding ribosomal proteins"/>
    <property type="match status" value="1"/>
</dbReference>
<evidence type="ECO:0000255" key="1">
    <source>
        <dbReference type="HAMAP-Rule" id="MF_00340"/>
    </source>
</evidence>
<evidence type="ECO:0000256" key="2">
    <source>
        <dbReference type="SAM" id="MobiDB-lite"/>
    </source>
</evidence>
<evidence type="ECO:0000305" key="3"/>
<gene>
    <name evidence="1" type="primary">rpmF</name>
    <name type="ordered locus">Maqu_1870</name>
</gene>
<reference key="1">
    <citation type="journal article" date="2011" name="Appl. Environ. Microbiol.">
        <title>Genomic potential of Marinobacter aquaeolei, a biogeochemical 'opportunitroph'.</title>
        <authorList>
            <person name="Singer E."/>
            <person name="Webb E.A."/>
            <person name="Nelson W.C."/>
            <person name="Heidelberg J.F."/>
            <person name="Ivanova N."/>
            <person name="Pati A."/>
            <person name="Edwards K.J."/>
        </authorList>
    </citation>
    <scope>NUCLEOTIDE SEQUENCE [LARGE SCALE GENOMIC DNA]</scope>
    <source>
        <strain>ATCC 700491 / DSM 11845 / VT8</strain>
    </source>
</reference>
<name>RL32_MARN8</name>
<accession>A1U1T3</accession>
<proteinExistence type="inferred from homology"/>